<comment type="function">
    <text>Involved in chlorophyll biosynthesis; introduces a magnesium ion into protoporphyrin IX to yield Mg-protoporphyrin IX.</text>
</comment>
<comment type="catalytic activity">
    <reaction>
        <text>protoporphyrin IX + Mg(2+) + ATP + H2O = Mg-protoporphyrin IX + ADP + phosphate + 3 H(+)</text>
        <dbReference type="Rhea" id="RHEA:13961"/>
        <dbReference type="ChEBI" id="CHEBI:15377"/>
        <dbReference type="ChEBI" id="CHEBI:15378"/>
        <dbReference type="ChEBI" id="CHEBI:18420"/>
        <dbReference type="ChEBI" id="CHEBI:30616"/>
        <dbReference type="ChEBI" id="CHEBI:43474"/>
        <dbReference type="ChEBI" id="CHEBI:57306"/>
        <dbReference type="ChEBI" id="CHEBI:60492"/>
        <dbReference type="ChEBI" id="CHEBI:456216"/>
        <dbReference type="EC" id="6.6.1.1"/>
    </reaction>
</comment>
<comment type="pathway">
    <text>Porphyrin-containing compound metabolism; chlorophyll biosynthesis.</text>
</comment>
<comment type="subcellular location">
    <subcellularLocation>
        <location>Plastid</location>
        <location>Chloroplast</location>
    </subcellularLocation>
</comment>
<comment type="similarity">
    <text evidence="2">Belongs to the Mg-chelatase subunits D/I family.</text>
</comment>
<keyword id="KW-0067">ATP-binding</keyword>
<keyword id="KW-0149">Chlorophyll biosynthesis</keyword>
<keyword id="KW-0150">Chloroplast</keyword>
<keyword id="KW-0436">Ligase</keyword>
<keyword id="KW-0547">Nucleotide-binding</keyword>
<keyword id="KW-0602">Photosynthesis</keyword>
<keyword id="KW-0934">Plastid</keyword>
<geneLocation type="chloroplast"/>
<evidence type="ECO:0000255" key="1"/>
<evidence type="ECO:0000305" key="2"/>
<gene>
    <name type="primary">chlI</name>
</gene>
<proteinExistence type="inferred from homology"/>
<protein>
    <recommendedName>
        <fullName>Magnesium-chelatase subunit ChlI</fullName>
        <ecNumber>6.6.1.1</ecNumber>
    </recommendedName>
    <alternativeName>
        <fullName>Mg-protoporphyrin IX chelatase</fullName>
    </alternativeName>
</protein>
<organism>
    <name type="scientific">Bigelowiella natans</name>
    <name type="common">Pedinomonas minutissima</name>
    <name type="synonym">Chlorarachnion sp. (strain CCMP621)</name>
    <dbReference type="NCBI Taxonomy" id="227086"/>
    <lineage>
        <taxon>Eukaryota</taxon>
        <taxon>Sar</taxon>
        <taxon>Rhizaria</taxon>
        <taxon>Cercozoa</taxon>
        <taxon>Chlorarachniophyceae</taxon>
        <taxon>Bigelowiella</taxon>
    </lineage>
</organism>
<reference key="1">
    <citation type="journal article" date="2007" name="Mol. Biol. Evol.">
        <title>The complete chloroplast genome of the chlorarachniophyte Bigelowiella natans: evidence for independent origins of chlorarachniophyte and euglenid secondary endosymbionts.</title>
        <authorList>
            <person name="Rogers M.B."/>
            <person name="Gilson P.R."/>
            <person name="Su V."/>
            <person name="McFadden G.I."/>
            <person name="Keeling P.J."/>
        </authorList>
    </citation>
    <scope>NUCLEOTIDE SEQUENCE [LARGE SCALE GENOMIC DNA]</scope>
</reference>
<feature type="chain" id="PRO_0000310406" description="Magnesium-chelatase subunit ChlI">
    <location>
        <begin position="1"/>
        <end position="365"/>
    </location>
</feature>
<feature type="binding site" evidence="1">
    <location>
        <begin position="54"/>
        <end position="61"/>
    </location>
    <ligand>
        <name>ATP</name>
        <dbReference type="ChEBI" id="CHEBI:30616"/>
    </ligand>
</feature>
<name>CHLI_BIGNA</name>
<accession>Q06J65</accession>
<sequence length="365" mass="40729">MKKYNKSFLIDVNCETLKVRQAFPFTALIGQTNMKLALILNVIDPKIGGVMSMGDRGTGKSTIVRSLVDLLPNIQVVSEDPFNSDPIDYDLMSQEVKEAKKSGEKIYTTSIKTPMVDLPLGATEDRVCGTIDIEKALIDGTKAFEPGLLAKANRGILYVDEVNLLDDHLVDILLDSAAGGWNTVEREGISIVHPARFILIGSGNPEEGELRPQLLDRFGMHVRIKTIKDPLSRVKIVERRSNFDKSAESFLKNYEYLQDFLKNRIVNAQGSLKDIKIDYQYKVNIAELCSNLNIDGLRGDIVTNRAVKAFVALNSRKTVLDKDVFTIMSLCLTHRLKKNPLESIDSSQNIVTIFKDIFGYSDLTA</sequence>
<dbReference type="EC" id="6.6.1.1"/>
<dbReference type="EMBL" id="DQ851108">
    <property type="protein sequence ID" value="ABG91394.1"/>
    <property type="molecule type" value="Genomic_DNA"/>
</dbReference>
<dbReference type="RefSeq" id="YP_778562.1">
    <property type="nucleotide sequence ID" value="NC_008408.1"/>
</dbReference>
<dbReference type="SMR" id="Q06J65"/>
<dbReference type="GeneID" id="4352979"/>
<dbReference type="UniPathway" id="UPA00668"/>
<dbReference type="GO" id="GO:0009507">
    <property type="term" value="C:chloroplast"/>
    <property type="evidence" value="ECO:0007669"/>
    <property type="project" value="UniProtKB-SubCell"/>
</dbReference>
<dbReference type="GO" id="GO:0005524">
    <property type="term" value="F:ATP binding"/>
    <property type="evidence" value="ECO:0007669"/>
    <property type="project" value="UniProtKB-KW"/>
</dbReference>
<dbReference type="GO" id="GO:0016851">
    <property type="term" value="F:magnesium chelatase activity"/>
    <property type="evidence" value="ECO:0007669"/>
    <property type="project" value="UniProtKB-EC"/>
</dbReference>
<dbReference type="GO" id="GO:0015995">
    <property type="term" value="P:chlorophyll biosynthetic process"/>
    <property type="evidence" value="ECO:0007669"/>
    <property type="project" value="UniProtKB-UniPathway"/>
</dbReference>
<dbReference type="GO" id="GO:0015979">
    <property type="term" value="P:photosynthesis"/>
    <property type="evidence" value="ECO:0007669"/>
    <property type="project" value="UniProtKB-KW"/>
</dbReference>
<dbReference type="FunFam" id="3.40.50.300:FF:000601">
    <property type="entry name" value="Mg-protoporphyrin IX chelatase"/>
    <property type="match status" value="1"/>
</dbReference>
<dbReference type="Gene3D" id="1.10.8.80">
    <property type="entry name" value="Magnesium chelatase subunit I, C-Terminal domain"/>
    <property type="match status" value="1"/>
</dbReference>
<dbReference type="Gene3D" id="3.40.50.300">
    <property type="entry name" value="P-loop containing nucleotide triphosphate hydrolases"/>
    <property type="match status" value="1"/>
</dbReference>
<dbReference type="InterPro" id="IPR045006">
    <property type="entry name" value="CHLI-like"/>
</dbReference>
<dbReference type="InterPro" id="IPR041628">
    <property type="entry name" value="ChlI/MoxR_AAA_lid"/>
</dbReference>
<dbReference type="InterPro" id="IPR011775">
    <property type="entry name" value="Mg_chelatase_ATPase-isu"/>
</dbReference>
<dbReference type="InterPro" id="IPR000523">
    <property type="entry name" value="Mg_chelatse_chII-like_cat_dom"/>
</dbReference>
<dbReference type="InterPro" id="IPR027417">
    <property type="entry name" value="P-loop_NTPase"/>
</dbReference>
<dbReference type="NCBIfam" id="TIGR02030">
    <property type="entry name" value="BchI-ChlI"/>
    <property type="match status" value="1"/>
</dbReference>
<dbReference type="PANTHER" id="PTHR32039">
    <property type="entry name" value="MAGNESIUM-CHELATASE SUBUNIT CHLI"/>
    <property type="match status" value="1"/>
</dbReference>
<dbReference type="PANTHER" id="PTHR32039:SF9">
    <property type="entry name" value="MAGNESIUM-CHELATASE SUBUNIT CHLI-2, CHLOROPLASTIC"/>
    <property type="match status" value="1"/>
</dbReference>
<dbReference type="Pfam" id="PF17863">
    <property type="entry name" value="AAA_lid_2"/>
    <property type="match status" value="1"/>
</dbReference>
<dbReference type="Pfam" id="PF01078">
    <property type="entry name" value="Mg_chelatase"/>
    <property type="match status" value="1"/>
</dbReference>
<dbReference type="SUPFAM" id="SSF52540">
    <property type="entry name" value="P-loop containing nucleoside triphosphate hydrolases"/>
    <property type="match status" value="1"/>
</dbReference>